<evidence type="ECO:0000250" key="1">
    <source>
        <dbReference type="UniProtKB" id="Q3TNH5"/>
    </source>
</evidence>
<evidence type="ECO:0000255" key="2"/>
<evidence type="ECO:0000255" key="3">
    <source>
        <dbReference type="PROSITE-ProRule" id="PRU10138"/>
    </source>
</evidence>
<evidence type="ECO:0000256" key="4">
    <source>
        <dbReference type="SAM" id="MobiDB-lite"/>
    </source>
</evidence>
<evidence type="ECO:0000269" key="5">
    <source>
    </source>
</evidence>
<evidence type="ECO:0000303" key="6">
    <source>
    </source>
</evidence>
<evidence type="ECO:0000303" key="7">
    <source>
    </source>
</evidence>
<evidence type="ECO:0000305" key="8"/>
<evidence type="ECO:0000312" key="9">
    <source>
        <dbReference type="HGNC" id="HGNC:25365"/>
    </source>
</evidence>
<sequence>MSISLSSLILLPIWINMAQIQQGGPDEKEKTTALKDLLSRIDLDELMKKDEPPLDFPDTLEGFEYAFNEKGQLRHIKTGEPFVFNYREDLHRWNQKRYEALGEIITKYVYELLEKDCNLKKVSIPVDATESEPKSFIFMSEDALTNPQKLMVLIHGSGVVRAGQWARRLIINEDLDSGTQIPFIKRAVAEGYGVIVLNPNENYIEVEKPKIHVQSSSDSSDEPAEKRERKDKVSKETKKRRDFYEKYRNPQREKEMMQLYIRENGSPEEHAIYVWDHFIAQAAAENVFFVAHSYGGLAFVELMIQREADVKNKVTAVALTDSVHNVWHQEAGKTIREWMRENCCNWVSSSEPLDTSVESMLPDCPRVSAGTDRHELTSWKSFPSIFKFFTEASEAKTSSLKPAVTRRSHRIKHEEL</sequence>
<keyword id="KW-0025">Alternative splicing</keyword>
<keyword id="KW-0963">Cytoplasm</keyword>
<keyword id="KW-0256">Endoplasmic reticulum</keyword>
<keyword id="KW-0507">mRNA processing</keyword>
<keyword id="KW-0508">mRNA splicing</keyword>
<keyword id="KW-0539">Nucleus</keyword>
<keyword id="KW-1267">Proteomics identification</keyword>
<keyword id="KW-1185">Reference proteome</keyword>
<keyword id="KW-0732">Signal</keyword>
<gene>
    <name evidence="9" type="primary">ARB2A</name>
    <name type="synonym">C5orf21</name>
    <name type="synonym">FAM172A</name>
</gene>
<protein>
    <recommendedName>
        <fullName evidence="8">Cotranscriptional regulator ARB2A</fullName>
    </recommendedName>
    <alternativeName>
        <fullName evidence="9">ARB2 cotranscriptional regulator A</fullName>
    </alternativeName>
    <alternativeName>
        <fullName evidence="1">Cotranscriptional regulator FAM172A</fullName>
    </alternativeName>
    <alternativeName>
        <fullName>Protein FAM172A</fullName>
    </alternativeName>
</protein>
<comment type="function">
    <text evidence="1">Plays a role in the regulation of alternative splicing, by interacting with AGO2 and CHD7. Seems to be required for stabilizing protein-protein interactions at the chromatin-spliceosome interface. May have hydrolase activity.</text>
</comment>
<comment type="subunit">
    <text evidence="1">Interacts with AGO2. Found in a complex, composed of AGO2, CHD7 and ARB2A.</text>
</comment>
<comment type="interaction">
    <interactant intactId="EBI-2556079">
        <id>Q8WUF8</id>
    </interactant>
    <interactant intactId="EBI-6165891">
        <id>Q14696</id>
        <label>MESD</label>
    </interactant>
    <organismsDiffer>false</organismsDiffer>
    <experiments>3</experiments>
</comment>
<comment type="subcellular location">
    <subcellularLocation>
        <location evidence="1">Nucleus</location>
    </subcellularLocation>
    <subcellularLocation>
        <location evidence="1">Cytoplasm</location>
    </subcellularLocation>
    <subcellularLocation>
        <location evidence="1">Endoplasmic reticulum</location>
    </subcellularLocation>
</comment>
<comment type="alternative products">
    <event type="alternative splicing"/>
    <isoform>
        <id>Q8WUF8-1</id>
        <name>1</name>
        <sequence type="displayed"/>
    </isoform>
    <isoform>
        <id>Q8WUF8-2</id>
        <name>2</name>
        <sequence type="described" ref="VSP_031749"/>
    </isoform>
    <isoform>
        <id>Q8WUF8-3</id>
        <name>3</name>
        <sequence type="described" ref="VSP_043313"/>
    </isoform>
    <isoform>
        <id>Q8WUF8-4</id>
        <name>4</name>
        <sequence type="described" ref="VSP_043313 VSP_043314"/>
    </isoform>
</comment>
<comment type="similarity">
    <text evidence="8">Belongs to the ARB2A family.</text>
</comment>
<dbReference type="EMBL" id="AL136630">
    <property type="protein sequence ID" value="CAB66565.1"/>
    <property type="molecule type" value="mRNA"/>
</dbReference>
<dbReference type="EMBL" id="AK295879">
    <property type="protein sequence ID" value="BAG58676.1"/>
    <property type="molecule type" value="mRNA"/>
</dbReference>
<dbReference type="EMBL" id="AK296986">
    <property type="protein sequence ID" value="BAG59527.1"/>
    <property type="molecule type" value="mRNA"/>
</dbReference>
<dbReference type="EMBL" id="AK312930">
    <property type="protein sequence ID" value="BAG35773.1"/>
    <property type="molecule type" value="mRNA"/>
</dbReference>
<dbReference type="EMBL" id="AC093268">
    <property type="status" value="NOT_ANNOTATED_CDS"/>
    <property type="molecule type" value="Genomic_DNA"/>
</dbReference>
<dbReference type="EMBL" id="AC099501">
    <property type="status" value="NOT_ANNOTATED_CDS"/>
    <property type="molecule type" value="Genomic_DNA"/>
</dbReference>
<dbReference type="EMBL" id="AC106818">
    <property type="status" value="NOT_ANNOTATED_CDS"/>
    <property type="molecule type" value="Genomic_DNA"/>
</dbReference>
<dbReference type="EMBL" id="AC108102">
    <property type="status" value="NOT_ANNOTATED_CDS"/>
    <property type="molecule type" value="Genomic_DNA"/>
</dbReference>
<dbReference type="EMBL" id="AC114980">
    <property type="status" value="NOT_ANNOTATED_CDS"/>
    <property type="molecule type" value="Genomic_DNA"/>
</dbReference>
<dbReference type="EMBL" id="AC117528">
    <property type="status" value="NOT_ANNOTATED_CDS"/>
    <property type="molecule type" value="Genomic_DNA"/>
</dbReference>
<dbReference type="EMBL" id="CH471084">
    <property type="protein sequence ID" value="EAW96012.1"/>
    <property type="molecule type" value="Genomic_DNA"/>
</dbReference>
<dbReference type="EMBL" id="BC020584">
    <property type="protein sequence ID" value="AAH20584.1"/>
    <property type="molecule type" value="mRNA"/>
</dbReference>
<dbReference type="CCDS" id="CCDS4069.1">
    <molecule id="Q8WUF8-1"/>
</dbReference>
<dbReference type="CCDS" id="CCDS54879.1">
    <molecule id="Q8WUF8-4"/>
</dbReference>
<dbReference type="CCDS" id="CCDS54880.1">
    <molecule id="Q8WUF8-3"/>
</dbReference>
<dbReference type="RefSeq" id="NP_001156889.1">
    <molecule id="Q8WUF8-3"/>
    <property type="nucleotide sequence ID" value="NM_001163417.1"/>
</dbReference>
<dbReference type="RefSeq" id="NP_001156890.1">
    <molecule id="Q8WUF8-4"/>
    <property type="nucleotide sequence ID" value="NM_001163418.1"/>
</dbReference>
<dbReference type="RefSeq" id="NP_114431.2">
    <molecule id="Q8WUF8-1"/>
    <property type="nucleotide sequence ID" value="NM_032042.5"/>
</dbReference>
<dbReference type="RefSeq" id="XP_006714780.1">
    <molecule id="Q8WUF8-1"/>
    <property type="nucleotide sequence ID" value="XM_006714717.4"/>
</dbReference>
<dbReference type="RefSeq" id="XP_011541974.1">
    <property type="nucleotide sequence ID" value="XM_011543672.2"/>
</dbReference>
<dbReference type="RefSeq" id="XP_016865444.1">
    <molecule id="Q8WUF8-3"/>
    <property type="nucleotide sequence ID" value="XM_017009955.2"/>
</dbReference>
<dbReference type="RefSeq" id="XP_016865445.1">
    <property type="nucleotide sequence ID" value="XM_017009956.1"/>
</dbReference>
<dbReference type="RefSeq" id="XP_047273766.1">
    <molecule id="Q8WUF8-3"/>
    <property type="nucleotide sequence ID" value="XM_047417810.1"/>
</dbReference>
<dbReference type="RefSeq" id="XP_054209612.1">
    <molecule id="Q8WUF8-1"/>
    <property type="nucleotide sequence ID" value="XM_054353637.1"/>
</dbReference>
<dbReference type="RefSeq" id="XP_054209619.1">
    <molecule id="Q8WUF8-3"/>
    <property type="nucleotide sequence ID" value="XM_054353644.1"/>
</dbReference>
<dbReference type="RefSeq" id="XP_054209620.1">
    <molecule id="Q8WUF8-3"/>
    <property type="nucleotide sequence ID" value="XM_054353645.1"/>
</dbReference>
<dbReference type="SMR" id="Q8WUF8"/>
<dbReference type="BioGRID" id="123840">
    <property type="interactions" value="31"/>
</dbReference>
<dbReference type="FunCoup" id="Q8WUF8">
    <property type="interactions" value="4355"/>
</dbReference>
<dbReference type="IntAct" id="Q8WUF8">
    <property type="interactions" value="21"/>
</dbReference>
<dbReference type="MINT" id="Q8WUF8"/>
<dbReference type="STRING" id="9606.ENSP00000379294"/>
<dbReference type="ESTHER" id="human-f172a">
    <property type="family name" value="Arb2_FAM172A"/>
</dbReference>
<dbReference type="iPTMnet" id="Q8WUF8"/>
<dbReference type="PhosphoSitePlus" id="Q8WUF8"/>
<dbReference type="BioMuta" id="FAM172A"/>
<dbReference type="DMDM" id="74730707"/>
<dbReference type="jPOST" id="Q8WUF8"/>
<dbReference type="MassIVE" id="Q8WUF8"/>
<dbReference type="PaxDb" id="9606-ENSP00000379294"/>
<dbReference type="PeptideAtlas" id="Q8WUF8"/>
<dbReference type="ProteomicsDB" id="74667">
    <molecule id="Q8WUF8-1"/>
</dbReference>
<dbReference type="ProteomicsDB" id="74668">
    <molecule id="Q8WUF8-2"/>
</dbReference>
<dbReference type="ProteomicsDB" id="74669">
    <molecule id="Q8WUF8-3"/>
</dbReference>
<dbReference type="ProteomicsDB" id="74670">
    <molecule id="Q8WUF8-4"/>
</dbReference>
<dbReference type="Pumba" id="Q8WUF8"/>
<dbReference type="Antibodypedia" id="2355">
    <property type="antibodies" value="44 antibodies from 14 providers"/>
</dbReference>
<dbReference type="DNASU" id="83989"/>
<dbReference type="Ensembl" id="ENST00000395965.8">
    <molecule id="Q8WUF8-1"/>
    <property type="protein sequence ID" value="ENSP00000379294.3"/>
    <property type="gene ID" value="ENSG00000113391.19"/>
</dbReference>
<dbReference type="Ensembl" id="ENST00000505869.5">
    <molecule id="Q8WUF8-4"/>
    <property type="protein sequence ID" value="ENSP00000426284.1"/>
    <property type="gene ID" value="ENSG00000113391.19"/>
</dbReference>
<dbReference type="Ensembl" id="ENST00000509163.5">
    <molecule id="Q8WUF8-3"/>
    <property type="protein sequence ID" value="ENSP00000423841.1"/>
    <property type="gene ID" value="ENSG00000113391.19"/>
</dbReference>
<dbReference type="GeneID" id="83989"/>
<dbReference type="KEGG" id="hsa:83989"/>
<dbReference type="MANE-Select" id="ENST00000395965.8">
    <property type="protein sequence ID" value="ENSP00000379294.3"/>
    <property type="RefSeq nucleotide sequence ID" value="NM_032042.6"/>
    <property type="RefSeq protein sequence ID" value="NP_114431.2"/>
</dbReference>
<dbReference type="UCSC" id="uc010jbd.4">
    <molecule id="Q8WUF8-1"/>
    <property type="organism name" value="human"/>
</dbReference>
<dbReference type="AGR" id="HGNC:25365"/>
<dbReference type="CTD" id="83989"/>
<dbReference type="DisGeNET" id="83989"/>
<dbReference type="GeneCards" id="ARB2A"/>
<dbReference type="HGNC" id="HGNC:25365">
    <property type="gene designation" value="ARB2A"/>
</dbReference>
<dbReference type="HPA" id="ENSG00000113391">
    <property type="expression patterns" value="Low tissue specificity"/>
</dbReference>
<dbReference type="neXtProt" id="NX_Q8WUF8"/>
<dbReference type="OpenTargets" id="ENSG00000113391"/>
<dbReference type="PharmGKB" id="PA162387241"/>
<dbReference type="VEuPathDB" id="HostDB:ENSG00000113391"/>
<dbReference type="eggNOG" id="KOG3967">
    <property type="taxonomic scope" value="Eukaryota"/>
</dbReference>
<dbReference type="GeneTree" id="ENSGT00530000063907"/>
<dbReference type="HOGENOM" id="CLU_048484_2_0_1"/>
<dbReference type="InParanoid" id="Q8WUF8"/>
<dbReference type="OMA" id="LAFVELX"/>
<dbReference type="OrthoDB" id="421951at2759"/>
<dbReference type="PAN-GO" id="Q8WUF8">
    <property type="GO annotations" value="3 GO annotations based on evolutionary models"/>
</dbReference>
<dbReference type="PhylomeDB" id="Q8WUF8"/>
<dbReference type="TreeFam" id="TF315960"/>
<dbReference type="PathwayCommons" id="Q8WUF8"/>
<dbReference type="SignaLink" id="Q8WUF8"/>
<dbReference type="BioGRID-ORCS" id="83989">
    <property type="hits" value="13 hits in 1153 CRISPR screens"/>
</dbReference>
<dbReference type="ChiTaRS" id="FAM172A">
    <property type="organism name" value="human"/>
</dbReference>
<dbReference type="GeneWiki" id="C5orf21"/>
<dbReference type="GenomeRNAi" id="83989"/>
<dbReference type="Pharos" id="Q8WUF8">
    <property type="development level" value="Tbio"/>
</dbReference>
<dbReference type="PRO" id="PR:Q8WUF8"/>
<dbReference type="Proteomes" id="UP000005640">
    <property type="component" value="Chromosome 5"/>
</dbReference>
<dbReference type="RNAct" id="Q8WUF8">
    <property type="molecule type" value="protein"/>
</dbReference>
<dbReference type="Bgee" id="ENSG00000113391">
    <property type="expression patterns" value="Expressed in calcaneal tendon and 197 other cell types or tissues"/>
</dbReference>
<dbReference type="ExpressionAtlas" id="Q8WUF8">
    <property type="expression patterns" value="baseline and differential"/>
</dbReference>
<dbReference type="GO" id="GO:0005783">
    <property type="term" value="C:endoplasmic reticulum"/>
    <property type="evidence" value="ECO:0000314"/>
    <property type="project" value="LIFEdb"/>
</dbReference>
<dbReference type="GO" id="GO:0005634">
    <property type="term" value="C:nucleus"/>
    <property type="evidence" value="ECO:0000250"/>
    <property type="project" value="UniProtKB"/>
</dbReference>
<dbReference type="GO" id="GO:0006397">
    <property type="term" value="P:mRNA processing"/>
    <property type="evidence" value="ECO:0007669"/>
    <property type="project" value="UniProtKB-KW"/>
</dbReference>
<dbReference type="GO" id="GO:0014032">
    <property type="term" value="P:neural crest cell development"/>
    <property type="evidence" value="ECO:0000250"/>
    <property type="project" value="UniProtKB"/>
</dbReference>
<dbReference type="GO" id="GO:0000381">
    <property type="term" value="P:regulation of alternative mRNA splicing, via spliceosome"/>
    <property type="evidence" value="ECO:0000250"/>
    <property type="project" value="UniProtKB"/>
</dbReference>
<dbReference type="GO" id="GO:0031048">
    <property type="term" value="P:regulatory ncRNA-mediated heterochromatin formation"/>
    <property type="evidence" value="ECO:0000318"/>
    <property type="project" value="GO_Central"/>
</dbReference>
<dbReference type="GO" id="GO:0008380">
    <property type="term" value="P:RNA splicing"/>
    <property type="evidence" value="ECO:0007669"/>
    <property type="project" value="UniProtKB-KW"/>
</dbReference>
<dbReference type="InterPro" id="IPR029058">
    <property type="entry name" value="AB_hydrolase_fold"/>
</dbReference>
<dbReference type="InterPro" id="IPR048263">
    <property type="entry name" value="Arb2"/>
</dbReference>
<dbReference type="InterPro" id="IPR053858">
    <property type="entry name" value="Arb2_dom"/>
</dbReference>
<dbReference type="PANTHER" id="PTHR21357:SF3">
    <property type="entry name" value="COTRANSCRIPTIONAL REGULATOR FAM172A"/>
    <property type="match status" value="1"/>
</dbReference>
<dbReference type="PANTHER" id="PTHR21357">
    <property type="entry name" value="FAM172 FAMILY PROTEIN HOMOLOG CG10038"/>
    <property type="match status" value="1"/>
</dbReference>
<dbReference type="Pfam" id="PF22749">
    <property type="entry name" value="Arb2"/>
    <property type="match status" value="1"/>
</dbReference>
<dbReference type="SUPFAM" id="SSF53474">
    <property type="entry name" value="alpha/beta-Hydrolases"/>
    <property type="match status" value="1"/>
</dbReference>
<dbReference type="PROSITE" id="PS00014">
    <property type="entry name" value="ER_TARGET"/>
    <property type="match status" value="1"/>
</dbReference>
<organism>
    <name type="scientific">Homo sapiens</name>
    <name type="common">Human</name>
    <dbReference type="NCBI Taxonomy" id="9606"/>
    <lineage>
        <taxon>Eukaryota</taxon>
        <taxon>Metazoa</taxon>
        <taxon>Chordata</taxon>
        <taxon>Craniata</taxon>
        <taxon>Vertebrata</taxon>
        <taxon>Euteleostomi</taxon>
        <taxon>Mammalia</taxon>
        <taxon>Eutheria</taxon>
        <taxon>Euarchontoglires</taxon>
        <taxon>Primates</taxon>
        <taxon>Haplorrhini</taxon>
        <taxon>Catarrhini</taxon>
        <taxon>Hominidae</taxon>
        <taxon>Homo</taxon>
    </lineage>
</organism>
<reference key="1">
    <citation type="journal article" date="2001" name="Genome Res.">
        <title>Towards a catalog of human genes and proteins: sequencing and analysis of 500 novel complete protein coding human cDNAs.</title>
        <authorList>
            <person name="Wiemann S."/>
            <person name="Weil B."/>
            <person name="Wellenreuther R."/>
            <person name="Gassenhuber J."/>
            <person name="Glassl S."/>
            <person name="Ansorge W."/>
            <person name="Boecher M."/>
            <person name="Bloecker H."/>
            <person name="Bauersachs S."/>
            <person name="Blum H."/>
            <person name="Lauber J."/>
            <person name="Duesterhoeft A."/>
            <person name="Beyer A."/>
            <person name="Koehrer K."/>
            <person name="Strack N."/>
            <person name="Mewes H.-W."/>
            <person name="Ottenwaelder B."/>
            <person name="Obermaier B."/>
            <person name="Tampe J."/>
            <person name="Heubner D."/>
            <person name="Wambutt R."/>
            <person name="Korn B."/>
            <person name="Klein M."/>
            <person name="Poustka A."/>
        </authorList>
    </citation>
    <scope>NUCLEOTIDE SEQUENCE [LARGE SCALE MRNA] (ISOFORM 2)</scope>
    <source>
        <tissue>Brain</tissue>
    </source>
</reference>
<reference key="2">
    <citation type="journal article" date="2004" name="Nat. Genet.">
        <title>Complete sequencing and characterization of 21,243 full-length human cDNAs.</title>
        <authorList>
            <person name="Ota T."/>
            <person name="Suzuki Y."/>
            <person name="Nishikawa T."/>
            <person name="Otsuki T."/>
            <person name="Sugiyama T."/>
            <person name="Irie R."/>
            <person name="Wakamatsu A."/>
            <person name="Hayashi K."/>
            <person name="Sato H."/>
            <person name="Nagai K."/>
            <person name="Kimura K."/>
            <person name="Makita H."/>
            <person name="Sekine M."/>
            <person name="Obayashi M."/>
            <person name="Nishi T."/>
            <person name="Shibahara T."/>
            <person name="Tanaka T."/>
            <person name="Ishii S."/>
            <person name="Yamamoto J."/>
            <person name="Saito K."/>
            <person name="Kawai Y."/>
            <person name="Isono Y."/>
            <person name="Nakamura Y."/>
            <person name="Nagahari K."/>
            <person name="Murakami K."/>
            <person name="Yasuda T."/>
            <person name="Iwayanagi T."/>
            <person name="Wagatsuma M."/>
            <person name="Shiratori A."/>
            <person name="Sudo H."/>
            <person name="Hosoiri T."/>
            <person name="Kaku Y."/>
            <person name="Kodaira H."/>
            <person name="Kondo H."/>
            <person name="Sugawara M."/>
            <person name="Takahashi M."/>
            <person name="Kanda K."/>
            <person name="Yokoi T."/>
            <person name="Furuya T."/>
            <person name="Kikkawa E."/>
            <person name="Omura Y."/>
            <person name="Abe K."/>
            <person name="Kamihara K."/>
            <person name="Katsuta N."/>
            <person name="Sato K."/>
            <person name="Tanikawa M."/>
            <person name="Yamazaki M."/>
            <person name="Ninomiya K."/>
            <person name="Ishibashi T."/>
            <person name="Yamashita H."/>
            <person name="Murakawa K."/>
            <person name="Fujimori K."/>
            <person name="Tanai H."/>
            <person name="Kimata M."/>
            <person name="Watanabe M."/>
            <person name="Hiraoka S."/>
            <person name="Chiba Y."/>
            <person name="Ishida S."/>
            <person name="Ono Y."/>
            <person name="Takiguchi S."/>
            <person name="Watanabe S."/>
            <person name="Yosida M."/>
            <person name="Hotuta T."/>
            <person name="Kusano J."/>
            <person name="Kanehori K."/>
            <person name="Takahashi-Fujii A."/>
            <person name="Hara H."/>
            <person name="Tanase T.-O."/>
            <person name="Nomura Y."/>
            <person name="Togiya S."/>
            <person name="Komai F."/>
            <person name="Hara R."/>
            <person name="Takeuchi K."/>
            <person name="Arita M."/>
            <person name="Imose N."/>
            <person name="Musashino K."/>
            <person name="Yuuki H."/>
            <person name="Oshima A."/>
            <person name="Sasaki N."/>
            <person name="Aotsuka S."/>
            <person name="Yoshikawa Y."/>
            <person name="Matsunawa H."/>
            <person name="Ichihara T."/>
            <person name="Shiohata N."/>
            <person name="Sano S."/>
            <person name="Moriya S."/>
            <person name="Momiyama H."/>
            <person name="Satoh N."/>
            <person name="Takami S."/>
            <person name="Terashima Y."/>
            <person name="Suzuki O."/>
            <person name="Nakagawa S."/>
            <person name="Senoh A."/>
            <person name="Mizoguchi H."/>
            <person name="Goto Y."/>
            <person name="Shimizu F."/>
            <person name="Wakebe H."/>
            <person name="Hishigaki H."/>
            <person name="Watanabe T."/>
            <person name="Sugiyama A."/>
            <person name="Takemoto M."/>
            <person name="Kawakami B."/>
            <person name="Yamazaki M."/>
            <person name="Watanabe K."/>
            <person name="Kumagai A."/>
            <person name="Itakura S."/>
            <person name="Fukuzumi Y."/>
            <person name="Fujimori Y."/>
            <person name="Komiyama M."/>
            <person name="Tashiro H."/>
            <person name="Tanigami A."/>
            <person name="Fujiwara T."/>
            <person name="Ono T."/>
            <person name="Yamada K."/>
            <person name="Fujii Y."/>
            <person name="Ozaki K."/>
            <person name="Hirao M."/>
            <person name="Ohmori Y."/>
            <person name="Kawabata A."/>
            <person name="Hikiji T."/>
            <person name="Kobatake N."/>
            <person name="Inagaki H."/>
            <person name="Ikema Y."/>
            <person name="Okamoto S."/>
            <person name="Okitani R."/>
            <person name="Kawakami T."/>
            <person name="Noguchi S."/>
            <person name="Itoh T."/>
            <person name="Shigeta K."/>
            <person name="Senba T."/>
            <person name="Matsumura K."/>
            <person name="Nakajima Y."/>
            <person name="Mizuno T."/>
            <person name="Morinaga M."/>
            <person name="Sasaki M."/>
            <person name="Togashi T."/>
            <person name="Oyama M."/>
            <person name="Hata H."/>
            <person name="Watanabe M."/>
            <person name="Komatsu T."/>
            <person name="Mizushima-Sugano J."/>
            <person name="Satoh T."/>
            <person name="Shirai Y."/>
            <person name="Takahashi Y."/>
            <person name="Nakagawa K."/>
            <person name="Okumura K."/>
            <person name="Nagase T."/>
            <person name="Nomura N."/>
            <person name="Kikuchi H."/>
            <person name="Masuho Y."/>
            <person name="Yamashita R."/>
            <person name="Nakai K."/>
            <person name="Yada T."/>
            <person name="Nakamura Y."/>
            <person name="Ohara O."/>
            <person name="Isogai T."/>
            <person name="Sugano S."/>
        </authorList>
    </citation>
    <scope>NUCLEOTIDE SEQUENCE [LARGE SCALE MRNA] (ISOFORMS 1; 3 AND 4)</scope>
    <source>
        <tissue>Hippocampus</tissue>
        <tissue>Placenta</tissue>
        <tissue>Tongue</tissue>
    </source>
</reference>
<reference key="3">
    <citation type="journal article" date="2004" name="Nature">
        <title>The DNA sequence and comparative analysis of human chromosome 5.</title>
        <authorList>
            <person name="Schmutz J."/>
            <person name="Martin J."/>
            <person name="Terry A."/>
            <person name="Couronne O."/>
            <person name="Grimwood J."/>
            <person name="Lowry S."/>
            <person name="Gordon L.A."/>
            <person name="Scott D."/>
            <person name="Xie G."/>
            <person name="Huang W."/>
            <person name="Hellsten U."/>
            <person name="Tran-Gyamfi M."/>
            <person name="She X."/>
            <person name="Prabhakar S."/>
            <person name="Aerts A."/>
            <person name="Altherr M."/>
            <person name="Bajorek E."/>
            <person name="Black S."/>
            <person name="Branscomb E."/>
            <person name="Caoile C."/>
            <person name="Challacombe J.F."/>
            <person name="Chan Y.M."/>
            <person name="Denys M."/>
            <person name="Detter J.C."/>
            <person name="Escobar J."/>
            <person name="Flowers D."/>
            <person name="Fotopulos D."/>
            <person name="Glavina T."/>
            <person name="Gomez M."/>
            <person name="Gonzales E."/>
            <person name="Goodstein D."/>
            <person name="Grigoriev I."/>
            <person name="Groza M."/>
            <person name="Hammon N."/>
            <person name="Hawkins T."/>
            <person name="Haydu L."/>
            <person name="Israni S."/>
            <person name="Jett J."/>
            <person name="Kadner K."/>
            <person name="Kimball H."/>
            <person name="Kobayashi A."/>
            <person name="Lopez F."/>
            <person name="Lou Y."/>
            <person name="Martinez D."/>
            <person name="Medina C."/>
            <person name="Morgan J."/>
            <person name="Nandkeshwar R."/>
            <person name="Noonan J.P."/>
            <person name="Pitluck S."/>
            <person name="Pollard M."/>
            <person name="Predki P."/>
            <person name="Priest J."/>
            <person name="Ramirez L."/>
            <person name="Retterer J."/>
            <person name="Rodriguez A."/>
            <person name="Rogers S."/>
            <person name="Salamov A."/>
            <person name="Salazar A."/>
            <person name="Thayer N."/>
            <person name="Tice H."/>
            <person name="Tsai M."/>
            <person name="Ustaszewska A."/>
            <person name="Vo N."/>
            <person name="Wheeler J."/>
            <person name="Wu K."/>
            <person name="Yang J."/>
            <person name="Dickson M."/>
            <person name="Cheng J.-F."/>
            <person name="Eichler E.E."/>
            <person name="Olsen A."/>
            <person name="Pennacchio L.A."/>
            <person name="Rokhsar D.S."/>
            <person name="Richardson P."/>
            <person name="Lucas S.M."/>
            <person name="Myers R.M."/>
            <person name="Rubin E.M."/>
        </authorList>
    </citation>
    <scope>NUCLEOTIDE SEQUENCE [LARGE SCALE GENOMIC DNA]</scope>
</reference>
<reference key="4">
    <citation type="submission" date="2005-07" db="EMBL/GenBank/DDBJ databases">
        <authorList>
            <person name="Mural R.J."/>
            <person name="Istrail S."/>
            <person name="Sutton G.G."/>
            <person name="Florea L."/>
            <person name="Halpern A.L."/>
            <person name="Mobarry C.M."/>
            <person name="Lippert R."/>
            <person name="Walenz B."/>
            <person name="Shatkay H."/>
            <person name="Dew I."/>
            <person name="Miller J.R."/>
            <person name="Flanigan M.J."/>
            <person name="Edwards N.J."/>
            <person name="Bolanos R."/>
            <person name="Fasulo D."/>
            <person name="Halldorsson B.V."/>
            <person name="Hannenhalli S."/>
            <person name="Turner R."/>
            <person name="Yooseph S."/>
            <person name="Lu F."/>
            <person name="Nusskern D.R."/>
            <person name="Shue B.C."/>
            <person name="Zheng X.H."/>
            <person name="Zhong F."/>
            <person name="Delcher A.L."/>
            <person name="Huson D.H."/>
            <person name="Kravitz S.A."/>
            <person name="Mouchard L."/>
            <person name="Reinert K."/>
            <person name="Remington K.A."/>
            <person name="Clark A.G."/>
            <person name="Waterman M.S."/>
            <person name="Eichler E.E."/>
            <person name="Adams M.D."/>
            <person name="Hunkapiller M.W."/>
            <person name="Myers E.W."/>
            <person name="Venter J.C."/>
        </authorList>
    </citation>
    <scope>NUCLEOTIDE SEQUENCE [LARGE SCALE GENOMIC DNA]</scope>
</reference>
<reference key="5">
    <citation type="journal article" date="2004" name="Genome Res.">
        <title>The status, quality, and expansion of the NIH full-length cDNA project: the Mammalian Gene Collection (MGC).</title>
        <authorList>
            <consortium name="The MGC Project Team"/>
        </authorList>
    </citation>
    <scope>NUCLEOTIDE SEQUENCE [LARGE SCALE MRNA] (ISOFORM 1)</scope>
    <source>
        <tissue>Duodenum</tissue>
    </source>
</reference>
<reference key="6">
    <citation type="journal article" date="2018" name="Proc. Natl. Acad. Sci. U.S.A.">
        <title>Dysregulation of cotranscriptional alternative splicing underlies CHARGE syndrome.</title>
        <authorList>
            <person name="Belanger C."/>
            <person name="Berube-Simard F.A."/>
            <person name="Leduc E."/>
            <person name="Bernas G."/>
            <person name="Campeau P.M."/>
            <person name="Lalani S.R."/>
            <person name="Martin D.M."/>
            <person name="Bielas S."/>
            <person name="Moccia A."/>
            <person name="Srivastava A."/>
            <person name="Silversides D.W."/>
            <person name="Pilon N."/>
        </authorList>
    </citation>
    <scope>VARIANTS GLN-228 AND 307-GLU--LEU-416 DEL</scope>
</reference>
<feature type="signal peptide" evidence="2">
    <location>
        <begin position="1"/>
        <end position="18"/>
    </location>
</feature>
<feature type="chain" id="PRO_0000320931" description="Cotranscriptional regulator ARB2A">
    <location>
        <begin position="19"/>
        <end position="416"/>
    </location>
</feature>
<feature type="region of interest" description="Disordered" evidence="4">
    <location>
        <begin position="208"/>
        <end position="247"/>
    </location>
</feature>
<feature type="short sequence motif" description="Prevents secretion from ER" evidence="3">
    <location>
        <begin position="413"/>
        <end position="416"/>
    </location>
</feature>
<feature type="compositionally biased region" description="Basic and acidic residues" evidence="4">
    <location>
        <begin position="223"/>
        <end position="236"/>
    </location>
</feature>
<feature type="active site" description="Nucleophile" evidence="1">
    <location>
        <position position="293"/>
    </location>
</feature>
<feature type="splice variant" id="VSP_043313" description="In isoform 3 and isoform 4." evidence="7">
    <location>
        <begin position="1"/>
        <end position="46"/>
    </location>
</feature>
<feature type="splice variant" id="VSP_043314" description="In isoform 4." evidence="7">
    <location>
        <begin position="126"/>
        <end position="189"/>
    </location>
</feature>
<feature type="splice variant" id="VSP_031749" description="In isoform 2." evidence="6">
    <original>ENGSPEEHAIYVWDHFIAQAAAENVFFVAHSYGGLAFVELMIQREADVKNKVTAVALTDSVHNVWHQEAGKTIREWMRENCCNWVSSSEPLDTSVESMLPDCPRVSAGTDRHELTSWKSFPSIFKFFTEASEAKTSSLKPAVTRRSHRIKHEEL</original>
    <variation>VSEITTFLYYFLYLVYILLYVDCFVFLQEY</variation>
    <location>
        <begin position="263"/>
        <end position="416"/>
    </location>
</feature>
<feature type="sequence variant" id="VAR_039312" description="In dbSNP:rs17083426.">
    <original>S</original>
    <variation>N</variation>
    <location>
        <position position="131"/>
    </location>
</feature>
<feature type="sequence variant" id="VAR_080593" description="Found in patients with CHARGES; uncertain significance; dbSNP:rs767629211." evidence="5">
    <original>E</original>
    <variation>Q</variation>
    <location>
        <position position="228"/>
    </location>
</feature>
<feature type="sequence variant" id="VAR_080594" description="Found in a patient with CHARGES; uncertain significance." evidence="5">
    <location>
        <begin position="307"/>
        <end position="416"/>
    </location>
</feature>
<feature type="sequence conflict" description="In Ref. 1; CAB66565." evidence="8" ref="1">
    <original>E</original>
    <variation>V</variation>
    <location>
        <position position="236"/>
    </location>
</feature>
<accession>Q8WUF8</accession>
<accession>B2R7C6</accession>
<accession>B4DJ14</accession>
<accession>B4DLG5</accession>
<accession>Q9H0U8</accession>
<proteinExistence type="evidence at protein level"/>
<name>ARB2A_HUMAN</name>